<keyword id="KW-0007">Acetylation</keyword>
<keyword id="KW-0687">Ribonucleoprotein</keyword>
<keyword id="KW-0689">Ribosomal protein</keyword>
<keyword id="KW-0694">RNA-binding</keyword>
<keyword id="KW-0699">rRNA-binding</keyword>
<evidence type="ECO:0000255" key="1">
    <source>
        <dbReference type="HAMAP-Rule" id="MF_00362"/>
    </source>
</evidence>
<evidence type="ECO:0000305" key="2"/>
<protein>
    <recommendedName>
        <fullName evidence="1">Large ribosomal subunit protein uL10</fullName>
    </recommendedName>
    <alternativeName>
        <fullName evidence="2">50S ribosomal protein L10</fullName>
    </alternativeName>
</protein>
<organism>
    <name type="scientific">Escherichia coli O7:K1 (strain IAI39 / ExPEC)</name>
    <dbReference type="NCBI Taxonomy" id="585057"/>
    <lineage>
        <taxon>Bacteria</taxon>
        <taxon>Pseudomonadati</taxon>
        <taxon>Pseudomonadota</taxon>
        <taxon>Gammaproteobacteria</taxon>
        <taxon>Enterobacterales</taxon>
        <taxon>Enterobacteriaceae</taxon>
        <taxon>Escherichia</taxon>
    </lineage>
</organism>
<accession>B7NRR3</accession>
<feature type="chain" id="PRO_1000120954" description="Large ribosomal subunit protein uL10">
    <location>
        <begin position="1"/>
        <end position="165"/>
    </location>
</feature>
<feature type="modified residue" description="N6-acetyllysine" evidence="1">
    <location>
        <position position="37"/>
    </location>
</feature>
<feature type="modified residue" description="N6-acetyllysine" evidence="1">
    <location>
        <position position="105"/>
    </location>
</feature>
<dbReference type="EMBL" id="CU928164">
    <property type="protein sequence ID" value="CAR20476.1"/>
    <property type="molecule type" value="Genomic_DNA"/>
</dbReference>
<dbReference type="RefSeq" id="WP_001207201.1">
    <property type="nucleotide sequence ID" value="NC_011750.1"/>
</dbReference>
<dbReference type="RefSeq" id="YP_002410244.1">
    <property type="nucleotide sequence ID" value="NC_011750.1"/>
</dbReference>
<dbReference type="SMR" id="B7NRR3"/>
<dbReference type="STRING" id="585057.ECIAI39_4370"/>
<dbReference type="GeneID" id="93777909"/>
<dbReference type="KEGG" id="ect:ECIAI39_4370"/>
<dbReference type="PATRIC" id="fig|585057.6.peg.4516"/>
<dbReference type="HOGENOM" id="CLU_092227_0_2_6"/>
<dbReference type="Proteomes" id="UP000000749">
    <property type="component" value="Chromosome"/>
</dbReference>
<dbReference type="GO" id="GO:0015934">
    <property type="term" value="C:large ribosomal subunit"/>
    <property type="evidence" value="ECO:0007669"/>
    <property type="project" value="InterPro"/>
</dbReference>
<dbReference type="GO" id="GO:0070180">
    <property type="term" value="F:large ribosomal subunit rRNA binding"/>
    <property type="evidence" value="ECO:0007669"/>
    <property type="project" value="UniProtKB-UniRule"/>
</dbReference>
<dbReference type="GO" id="GO:0003735">
    <property type="term" value="F:structural constituent of ribosome"/>
    <property type="evidence" value="ECO:0007669"/>
    <property type="project" value="InterPro"/>
</dbReference>
<dbReference type="GO" id="GO:0006412">
    <property type="term" value="P:translation"/>
    <property type="evidence" value="ECO:0007669"/>
    <property type="project" value="UniProtKB-UniRule"/>
</dbReference>
<dbReference type="CDD" id="cd05797">
    <property type="entry name" value="Ribosomal_L10"/>
    <property type="match status" value="1"/>
</dbReference>
<dbReference type="FunFam" id="3.30.70.1730:FF:000001">
    <property type="entry name" value="50S ribosomal protein L10"/>
    <property type="match status" value="1"/>
</dbReference>
<dbReference type="Gene3D" id="3.30.70.1730">
    <property type="match status" value="1"/>
</dbReference>
<dbReference type="Gene3D" id="6.10.250.2350">
    <property type="match status" value="1"/>
</dbReference>
<dbReference type="HAMAP" id="MF_00362">
    <property type="entry name" value="Ribosomal_uL10"/>
    <property type="match status" value="1"/>
</dbReference>
<dbReference type="InterPro" id="IPR001790">
    <property type="entry name" value="Ribosomal_uL10"/>
</dbReference>
<dbReference type="InterPro" id="IPR043141">
    <property type="entry name" value="Ribosomal_uL10-like_sf"/>
</dbReference>
<dbReference type="InterPro" id="IPR022973">
    <property type="entry name" value="Ribosomal_uL10_bac"/>
</dbReference>
<dbReference type="InterPro" id="IPR047865">
    <property type="entry name" value="Ribosomal_uL10_bac_type"/>
</dbReference>
<dbReference type="InterPro" id="IPR002363">
    <property type="entry name" value="Ribosomal_uL10_CS_bac"/>
</dbReference>
<dbReference type="NCBIfam" id="NF000955">
    <property type="entry name" value="PRK00099.1-1"/>
    <property type="match status" value="1"/>
</dbReference>
<dbReference type="PANTHER" id="PTHR11560">
    <property type="entry name" value="39S RIBOSOMAL PROTEIN L10, MITOCHONDRIAL"/>
    <property type="match status" value="1"/>
</dbReference>
<dbReference type="Pfam" id="PF00466">
    <property type="entry name" value="Ribosomal_L10"/>
    <property type="match status" value="1"/>
</dbReference>
<dbReference type="SUPFAM" id="SSF160369">
    <property type="entry name" value="Ribosomal protein L10-like"/>
    <property type="match status" value="1"/>
</dbReference>
<dbReference type="PROSITE" id="PS01109">
    <property type="entry name" value="RIBOSOMAL_L10"/>
    <property type="match status" value="1"/>
</dbReference>
<comment type="function">
    <text evidence="1">Forms part of the ribosomal stalk, playing a central role in the interaction of the ribosome with GTP-bound translation factors.</text>
</comment>
<comment type="subunit">
    <text evidence="1">Part of the ribosomal stalk of the 50S ribosomal subunit. The N-terminus interacts with L11 and the large rRNA to form the base of the stalk. The C-terminus forms an elongated spine to which L12 dimers bind in a sequential fashion forming a multimeric L10(L12)X complex.</text>
</comment>
<comment type="similarity">
    <text evidence="1">Belongs to the universal ribosomal protein uL10 family.</text>
</comment>
<name>RL10_ECO7I</name>
<gene>
    <name evidence="1" type="primary">rplJ</name>
    <name type="ordered locus">ECIAI39_4370</name>
</gene>
<sequence length="165" mass="17712">MALNLQDKQAIVAEVSEVAKGALSAVVADSRGVTVDKMTELRKAGREAGVYMRVVRNTLLRRAVEGTPFECLKDAFVGPTLIAYSMEHPGAAARLFKEFAKANAKFEVKAAAFEGELIPASQIDRLATLPTYEEAIARLMATMKEASAGKLVRTLAAVRDAKEAA</sequence>
<reference key="1">
    <citation type="journal article" date="2009" name="PLoS Genet.">
        <title>Organised genome dynamics in the Escherichia coli species results in highly diverse adaptive paths.</title>
        <authorList>
            <person name="Touchon M."/>
            <person name="Hoede C."/>
            <person name="Tenaillon O."/>
            <person name="Barbe V."/>
            <person name="Baeriswyl S."/>
            <person name="Bidet P."/>
            <person name="Bingen E."/>
            <person name="Bonacorsi S."/>
            <person name="Bouchier C."/>
            <person name="Bouvet O."/>
            <person name="Calteau A."/>
            <person name="Chiapello H."/>
            <person name="Clermont O."/>
            <person name="Cruveiller S."/>
            <person name="Danchin A."/>
            <person name="Diard M."/>
            <person name="Dossat C."/>
            <person name="Karoui M.E."/>
            <person name="Frapy E."/>
            <person name="Garry L."/>
            <person name="Ghigo J.M."/>
            <person name="Gilles A.M."/>
            <person name="Johnson J."/>
            <person name="Le Bouguenec C."/>
            <person name="Lescat M."/>
            <person name="Mangenot S."/>
            <person name="Martinez-Jehanne V."/>
            <person name="Matic I."/>
            <person name="Nassif X."/>
            <person name="Oztas S."/>
            <person name="Petit M.A."/>
            <person name="Pichon C."/>
            <person name="Rouy Z."/>
            <person name="Ruf C.S."/>
            <person name="Schneider D."/>
            <person name="Tourret J."/>
            <person name="Vacherie B."/>
            <person name="Vallenet D."/>
            <person name="Medigue C."/>
            <person name="Rocha E.P.C."/>
            <person name="Denamur E."/>
        </authorList>
    </citation>
    <scope>NUCLEOTIDE SEQUENCE [LARGE SCALE GENOMIC DNA]</scope>
    <source>
        <strain>IAI39 / ExPEC</strain>
    </source>
</reference>
<proteinExistence type="inferred from homology"/>